<reference key="1">
    <citation type="journal article" date="2011" name="J. Bacteriol.">
        <title>Comparative genomics of 28 Salmonella enterica isolates: evidence for CRISPR-mediated adaptive sublineage evolution.</title>
        <authorList>
            <person name="Fricke W.F."/>
            <person name="Mammel M.K."/>
            <person name="McDermott P.F."/>
            <person name="Tartera C."/>
            <person name="White D.G."/>
            <person name="Leclerc J.E."/>
            <person name="Ravel J."/>
            <person name="Cebula T.A."/>
        </authorList>
    </citation>
    <scope>NUCLEOTIDE SEQUENCE [LARGE SCALE GENOMIC DNA]</scope>
    <source>
        <strain>CVM19633</strain>
    </source>
</reference>
<accession>B4TVH0</accession>
<protein>
    <recommendedName>
        <fullName evidence="1">UPF0482 protein YnfB</fullName>
    </recommendedName>
</protein>
<feature type="signal peptide" evidence="1">
    <location>
        <begin position="1"/>
        <end position="28"/>
    </location>
</feature>
<feature type="chain" id="PRO_1000201010" description="UPF0482 protein YnfB">
    <location>
        <begin position="29"/>
        <end position="113"/>
    </location>
</feature>
<proteinExistence type="inferred from homology"/>
<comment type="similarity">
    <text evidence="1">Belongs to the UPF0482 family.</text>
</comment>
<evidence type="ECO:0000255" key="1">
    <source>
        <dbReference type="HAMAP-Rule" id="MF_01581"/>
    </source>
</evidence>
<keyword id="KW-0732">Signal</keyword>
<sequence>MNNTLSKRLCLTAMLTLAAVVYTTSAFAETSKLVIESGDSAQSRQEAAMEKEQWNDTRSLRQKVNTRAEKEWDKADAAFDNRDKCEQSANINAYWEPNTLRCLDRRTGRVITP</sequence>
<gene>
    <name evidence="1" type="primary">ynfB</name>
    <name type="ordered locus">SeSA_A1605</name>
</gene>
<name>YNFB_SALSV</name>
<organism>
    <name type="scientific">Salmonella schwarzengrund (strain CVM19633)</name>
    <dbReference type="NCBI Taxonomy" id="439843"/>
    <lineage>
        <taxon>Bacteria</taxon>
        <taxon>Pseudomonadati</taxon>
        <taxon>Pseudomonadota</taxon>
        <taxon>Gammaproteobacteria</taxon>
        <taxon>Enterobacterales</taxon>
        <taxon>Enterobacteriaceae</taxon>
        <taxon>Salmonella</taxon>
    </lineage>
</organism>
<dbReference type="EMBL" id="CP001127">
    <property type="protein sequence ID" value="ACF90657.1"/>
    <property type="molecule type" value="Genomic_DNA"/>
</dbReference>
<dbReference type="RefSeq" id="WP_001066440.1">
    <property type="nucleotide sequence ID" value="NC_011094.1"/>
</dbReference>
<dbReference type="KEGG" id="sew:SeSA_A1605"/>
<dbReference type="HOGENOM" id="CLU_167574_0_0_6"/>
<dbReference type="Proteomes" id="UP000001865">
    <property type="component" value="Chromosome"/>
</dbReference>
<dbReference type="HAMAP" id="MF_01581">
    <property type="entry name" value="UPF0482"/>
    <property type="match status" value="1"/>
</dbReference>
<dbReference type="InterPro" id="IPR009700">
    <property type="entry name" value="DUF1283"/>
</dbReference>
<dbReference type="NCBIfam" id="NF010180">
    <property type="entry name" value="PRK13659.1"/>
    <property type="match status" value="1"/>
</dbReference>
<dbReference type="Pfam" id="PF06932">
    <property type="entry name" value="DUF1283"/>
    <property type="match status" value="1"/>
</dbReference>